<gene>
    <name evidence="4" type="primary">scbA</name>
    <name evidence="7" type="ordered locus">SCO6266</name>
</gene>
<name>SCBA_STRCO</name>
<dbReference type="EC" id="2.3.1.277" evidence="1"/>
<dbReference type="EMBL" id="AL939127">
    <property type="protein sequence ID" value="CAB60185.1"/>
    <property type="molecule type" value="Genomic_DNA"/>
</dbReference>
<dbReference type="RefSeq" id="NP_630366.1">
    <property type="nucleotide sequence ID" value="NC_003888.3"/>
</dbReference>
<dbReference type="RefSeq" id="WP_003972659.1">
    <property type="nucleotide sequence ID" value="NZ_VNID01000009.1"/>
</dbReference>
<dbReference type="SMR" id="Q7AKF0"/>
<dbReference type="STRING" id="100226.gene:17763925"/>
<dbReference type="PaxDb" id="100226-SCO6266"/>
<dbReference type="GeneID" id="91382780"/>
<dbReference type="KEGG" id="sco:SCO6266"/>
<dbReference type="PATRIC" id="fig|100226.15.peg.6381"/>
<dbReference type="eggNOG" id="ENOG50342P2">
    <property type="taxonomic scope" value="Bacteria"/>
</dbReference>
<dbReference type="HOGENOM" id="CLU_061800_0_0_11"/>
<dbReference type="InParanoid" id="Q7AKF0"/>
<dbReference type="OrthoDB" id="7838374at2"/>
<dbReference type="PhylomeDB" id="Q7AKF0"/>
<dbReference type="BioCyc" id="MetaCyc:SCO6266-MONOMER"/>
<dbReference type="BRENDA" id="2.3.1.277">
    <property type="organism ID" value="5998"/>
</dbReference>
<dbReference type="Proteomes" id="UP000001973">
    <property type="component" value="Chromosome"/>
</dbReference>
<dbReference type="GO" id="GO:0016740">
    <property type="term" value="F:transferase activity"/>
    <property type="evidence" value="ECO:0007669"/>
    <property type="project" value="UniProtKB-KW"/>
</dbReference>
<dbReference type="InterPro" id="IPR047757">
    <property type="entry name" value="AfsA-like"/>
</dbReference>
<dbReference type="InterPro" id="IPR005509">
    <property type="entry name" value="AfsA_hotdog_dom"/>
</dbReference>
<dbReference type="InterPro" id="IPR029069">
    <property type="entry name" value="HotDog_dom_sf"/>
</dbReference>
<dbReference type="NCBIfam" id="NF041195">
    <property type="entry name" value="ScbA_BarX_GamBu"/>
    <property type="match status" value="1"/>
</dbReference>
<dbReference type="Pfam" id="PF03756">
    <property type="entry name" value="AfsA"/>
    <property type="match status" value="2"/>
</dbReference>
<dbReference type="SUPFAM" id="SSF54637">
    <property type="entry name" value="Thioesterase/thiol ester dehydrase-isomerase"/>
    <property type="match status" value="1"/>
</dbReference>
<evidence type="ECO:0000250" key="1">
    <source>
        <dbReference type="UniProtKB" id="B1VN93"/>
    </source>
</evidence>
<evidence type="ECO:0000269" key="2">
    <source>
    </source>
</evidence>
<evidence type="ECO:0000269" key="3">
    <source>
    </source>
</evidence>
<evidence type="ECO:0000303" key="4">
    <source>
    </source>
</evidence>
<evidence type="ECO:0000303" key="5">
    <source>
    </source>
</evidence>
<evidence type="ECO:0000305" key="6"/>
<evidence type="ECO:0000312" key="7">
    <source>
        <dbReference type="EMBL" id="CAB60185.1"/>
    </source>
</evidence>
<reference key="1">
    <citation type="journal article" date="2002" name="Nature">
        <title>Complete genome sequence of the model actinomycete Streptomyces coelicolor A3(2).</title>
        <authorList>
            <person name="Bentley S.D."/>
            <person name="Chater K.F."/>
            <person name="Cerdeno-Tarraga A.-M."/>
            <person name="Challis G.L."/>
            <person name="Thomson N.R."/>
            <person name="James K.D."/>
            <person name="Harris D.E."/>
            <person name="Quail M.A."/>
            <person name="Kieser H."/>
            <person name="Harper D."/>
            <person name="Bateman A."/>
            <person name="Brown S."/>
            <person name="Chandra G."/>
            <person name="Chen C.W."/>
            <person name="Collins M."/>
            <person name="Cronin A."/>
            <person name="Fraser A."/>
            <person name="Goble A."/>
            <person name="Hidalgo J."/>
            <person name="Hornsby T."/>
            <person name="Howarth S."/>
            <person name="Huang C.-H."/>
            <person name="Kieser T."/>
            <person name="Larke L."/>
            <person name="Murphy L.D."/>
            <person name="Oliver K."/>
            <person name="O'Neil S."/>
            <person name="Rabbinowitsch E."/>
            <person name="Rajandream M.A."/>
            <person name="Rutherford K.M."/>
            <person name="Rutter S."/>
            <person name="Seeger K."/>
            <person name="Saunders D."/>
            <person name="Sharp S."/>
            <person name="Squares R."/>
            <person name="Squares S."/>
            <person name="Taylor K."/>
            <person name="Warren T."/>
            <person name="Wietzorrek A."/>
            <person name="Woodward J.R."/>
            <person name="Barrell B.G."/>
            <person name="Parkhill J."/>
            <person name="Hopwood D.A."/>
        </authorList>
    </citation>
    <scope>NUCLEOTIDE SEQUENCE [LARGE SCALE GENOMIC DNA]</scope>
    <source>
        <strain>ATCC BAA-471 / A3(2) / M145</strain>
    </source>
</reference>
<reference key="2">
    <citation type="journal article" date="2007" name="Microbiology">
        <title>ScbA from Streptomyces coelicolor A3(2) has homology to fatty acid synthases and is able to synthesize gamma-butyrolactones.</title>
        <authorList>
            <person name="Hsiao N.H."/>
            <person name="Soeding J."/>
            <person name="Linke D."/>
            <person name="Lange C."/>
            <person name="Hertweck C."/>
            <person name="Wohlleben W."/>
            <person name="Takano E."/>
        </authorList>
    </citation>
    <scope>FUNCTION</scope>
    <scope>MUTAGENESIS OF GLU-78; GLU-240 AND ARG-243</scope>
    <source>
        <strain>ATCC BAA-471 / A3(2) / M145</strain>
    </source>
</reference>
<reference key="3">
    <citation type="journal article" date="2011" name="Microb. Biotechnol.">
        <title>Deletion of the signalling molecule synthase ScbA has pleiotropic effects on secondary metabolite biosynthesis, morphological differentiation and primary metabolism in Streptomyces coelicolor A3(2).</title>
        <authorList>
            <person name="D'Alia D."/>
            <person name="Eggle D."/>
            <person name="Nieselt K."/>
            <person name="Hu W.S."/>
            <person name="Breitling R."/>
            <person name="Takano E."/>
        </authorList>
    </citation>
    <scope>DISRUPTION PHENOTYPE</scope>
</reference>
<organism>
    <name type="scientific">Streptomyces coelicolor (strain ATCC BAA-471 / A3(2) / M145)</name>
    <dbReference type="NCBI Taxonomy" id="100226"/>
    <lineage>
        <taxon>Bacteria</taxon>
        <taxon>Bacillati</taxon>
        <taxon>Actinomycetota</taxon>
        <taxon>Actinomycetes</taxon>
        <taxon>Kitasatosporales</taxon>
        <taxon>Streptomycetaceae</taxon>
        <taxon>Streptomyces</taxon>
        <taxon>Streptomyces albidoflavus group</taxon>
    </lineage>
</organism>
<feature type="chain" id="PRO_0000450068" description="2-oxo-3-(phosphooxy)propyl 3-oxoalkanoate synthase">
    <location>
        <begin position="1"/>
        <end position="314"/>
    </location>
</feature>
<feature type="mutagenesis site" description="Cannot produce active gamma-butyrolactones." evidence="2">
    <original>E</original>
    <variation>A</variation>
    <location>
        <position position="78"/>
    </location>
</feature>
<feature type="mutagenesis site" description="Cannot produce active gamma-butyrolactones." evidence="2">
    <original>E</original>
    <variation>A</variation>
    <location>
        <position position="240"/>
    </location>
</feature>
<feature type="mutagenesis site" description="Cannot produce active gamma-butyrolactones." evidence="2">
    <original>R</original>
    <variation>K</variation>
    <location>
        <position position="243"/>
    </location>
</feature>
<accession>Q7AKF0</accession>
<sequence>MPEAVVLINSASDANSIEQTALPVPMALVHRTRVQDAFPVSWIPKGGDRFSVTAVLPHDHPFFAPVHGDRHDPLLIAETLRQAAMLVFHAGYGVPVGYHFLMATLDYTCHLDHLGVSGEVAELEVEVACSQLKFRGGQPVQGQVDWAVRRAGRLAATGTATTRFTSPQVYRRMRGDFATPTASVPGTAPVPAARAGRTRDEDVVLSASSQQDTWRLRVDTSHPTLFQRPNDHVPGMLLLEAARQAACLVTGPAPFVPSIGGTRFVRYAEFDSPCWIQATVRPGPAAGLTTVRVTGHQDGSLVFLTTLSGPAFSG</sequence>
<comment type="function">
    <text evidence="2">Involved of the biosynthesis of S.coelicolor butanolide 1 (SCB1), a gamma-butyrolactone that triggers antibiotic production.</text>
</comment>
<comment type="catalytic activity">
    <reaction evidence="1">
        <text>a medium-chain 3-oxoacyl-[ACP] + dihydroxyacetone phosphate = a (4-alkanoyl-5-oxo-2,5-dihydrofuran-3-yl)methyl phosphate + holo-[ACP] + H2O</text>
        <dbReference type="Rhea" id="RHEA:84095"/>
        <dbReference type="Rhea" id="RHEA-COMP:9685"/>
        <dbReference type="Rhea" id="RHEA-COMP:14764"/>
        <dbReference type="ChEBI" id="CHEBI:15377"/>
        <dbReference type="ChEBI" id="CHEBI:57642"/>
        <dbReference type="ChEBI" id="CHEBI:64479"/>
        <dbReference type="ChEBI" id="CHEBI:138603"/>
        <dbReference type="ChEBI" id="CHEBI:141052"/>
        <dbReference type="EC" id="2.3.1.277"/>
    </reaction>
</comment>
<comment type="disruption phenotype">
    <text evidence="3">Deletion of the gene leads to a strong perturbation in the expression of three pigmented antibiotic clusters. It also affects the secondary metabolite cluster responsible for synthesis of the siderophore desferrioxamine and expression of the genes encoding enzymes for primary metabolism pathways, which supply antibiotic precursors and genes for morphological differentiation.</text>
</comment>
<comment type="similarity">
    <text evidence="6">Belongs to the AfsA family.</text>
</comment>
<protein>
    <recommendedName>
        <fullName evidence="1">2-oxo-3-(phosphooxy)propyl 3-oxoalkanoate synthase</fullName>
        <ecNumber evidence="1">2.3.1.277</ecNumber>
    </recommendedName>
    <alternativeName>
        <fullName evidence="5">Signaling molecule synthase ScbA</fullName>
    </alternativeName>
</protein>
<keyword id="KW-1185">Reference proteome</keyword>
<keyword id="KW-0808">Transferase</keyword>
<proteinExistence type="evidence at protein level"/>